<sequence>MSYAADVKKELTGLRVHDGNAKAELSALMRMNGVSTLGIDQTVSVKTENAAIARRIYTLLKQNYTQIEVEVTVAEHNYMSQHKSYGVLLKNKVSDVLTDLGVDPFGLHPDIPDRILNQVDKRRSFLRGAFLAAGSVNSPEKANYHLEIFTTHEELAETLRLMMAEFGLPAKIIDRSGGYVIYIKRAEKIVDFLSTIGATQTMLRFEDIRMMRDMRNSVNRMTNAELANIQKTADAANKQVQQILFIANEIGDLDLLPKKLRDIAKARLEHPDDSLAELGDRLEISKSGANHRMRKLKALEDMINAGVTYDLNKL</sequence>
<feature type="chain" id="PRO_0000376512" description="Probable cell division protein WhiA">
    <location>
        <begin position="1"/>
        <end position="314"/>
    </location>
</feature>
<feature type="DNA-binding region" description="H-T-H motif" evidence="1">
    <location>
        <begin position="274"/>
        <end position="305"/>
    </location>
</feature>
<gene>
    <name evidence="1" type="primary">whiA</name>
    <name type="ordered locus">LCK_00387</name>
</gene>
<protein>
    <recommendedName>
        <fullName evidence="1">Probable cell division protein WhiA</fullName>
    </recommendedName>
</protein>
<reference key="1">
    <citation type="journal article" date="2008" name="J. Bacteriol.">
        <title>Complete genome sequence of Leuconostoc citreum KM20.</title>
        <authorList>
            <person name="Kim J.F."/>
            <person name="Jeong H."/>
            <person name="Lee J.-S."/>
            <person name="Choi S.-H."/>
            <person name="Ha M."/>
            <person name="Hur C.-G."/>
            <person name="Kim J.-S."/>
            <person name="Lee S."/>
            <person name="Park H.-S."/>
            <person name="Park Y.-H."/>
            <person name="Oh T.K."/>
        </authorList>
    </citation>
    <scope>NUCLEOTIDE SEQUENCE [LARGE SCALE GENOMIC DNA]</scope>
    <source>
        <strain>KM20</strain>
    </source>
</reference>
<comment type="function">
    <text evidence="1">Involved in cell division and chromosome segregation.</text>
</comment>
<comment type="similarity">
    <text evidence="1">Belongs to the WhiA family.</text>
</comment>
<proteinExistence type="inferred from homology"/>
<organism>
    <name type="scientific">Leuconostoc citreum (strain KM20)</name>
    <dbReference type="NCBI Taxonomy" id="349519"/>
    <lineage>
        <taxon>Bacteria</taxon>
        <taxon>Bacillati</taxon>
        <taxon>Bacillota</taxon>
        <taxon>Bacilli</taxon>
        <taxon>Lactobacillales</taxon>
        <taxon>Lactobacillaceae</taxon>
        <taxon>Leuconostoc</taxon>
    </lineage>
</organism>
<dbReference type="EMBL" id="DQ489736">
    <property type="protein sequence ID" value="ACA82220.1"/>
    <property type="molecule type" value="Genomic_DNA"/>
</dbReference>
<dbReference type="RefSeq" id="WP_004905152.1">
    <property type="nucleotide sequence ID" value="NC_010471.1"/>
</dbReference>
<dbReference type="SMR" id="B1MXG8"/>
<dbReference type="STRING" id="349519.LCK_00387"/>
<dbReference type="GeneID" id="61102685"/>
<dbReference type="KEGG" id="lci:LCK_00387"/>
<dbReference type="eggNOG" id="COG1481">
    <property type="taxonomic scope" value="Bacteria"/>
</dbReference>
<dbReference type="HOGENOM" id="CLU_053282_1_0_9"/>
<dbReference type="OrthoDB" id="401278at2"/>
<dbReference type="Proteomes" id="UP000002166">
    <property type="component" value="Chromosome"/>
</dbReference>
<dbReference type="GO" id="GO:0003677">
    <property type="term" value="F:DNA binding"/>
    <property type="evidence" value="ECO:0007669"/>
    <property type="project" value="UniProtKB-UniRule"/>
</dbReference>
<dbReference type="GO" id="GO:0004519">
    <property type="term" value="F:endonuclease activity"/>
    <property type="evidence" value="ECO:0007669"/>
    <property type="project" value="InterPro"/>
</dbReference>
<dbReference type="GO" id="GO:0051301">
    <property type="term" value="P:cell division"/>
    <property type="evidence" value="ECO:0007669"/>
    <property type="project" value="UniProtKB-UniRule"/>
</dbReference>
<dbReference type="GO" id="GO:0043937">
    <property type="term" value="P:regulation of sporulation"/>
    <property type="evidence" value="ECO:0007669"/>
    <property type="project" value="InterPro"/>
</dbReference>
<dbReference type="Gene3D" id="3.10.28.10">
    <property type="entry name" value="Homing endonucleases"/>
    <property type="match status" value="1"/>
</dbReference>
<dbReference type="HAMAP" id="MF_01420">
    <property type="entry name" value="HTH_type_WhiA"/>
    <property type="match status" value="1"/>
</dbReference>
<dbReference type="InterPro" id="IPR027434">
    <property type="entry name" value="Homing_endonucl"/>
</dbReference>
<dbReference type="InterPro" id="IPR004042">
    <property type="entry name" value="Intein_endonuc_central"/>
</dbReference>
<dbReference type="InterPro" id="IPR018478">
    <property type="entry name" value="Sporu_reg_WhiA_N_dom"/>
</dbReference>
<dbReference type="InterPro" id="IPR003802">
    <property type="entry name" value="Sporulation_regulator_WhiA"/>
</dbReference>
<dbReference type="InterPro" id="IPR023054">
    <property type="entry name" value="Sporulation_regulator_WhiA_C"/>
</dbReference>
<dbReference type="InterPro" id="IPR039518">
    <property type="entry name" value="WhiA_LAGLIDADG_dom"/>
</dbReference>
<dbReference type="NCBIfam" id="TIGR00647">
    <property type="entry name" value="DNA_bind_WhiA"/>
    <property type="match status" value="1"/>
</dbReference>
<dbReference type="PANTHER" id="PTHR37307">
    <property type="entry name" value="CELL DIVISION PROTEIN WHIA-RELATED"/>
    <property type="match status" value="1"/>
</dbReference>
<dbReference type="PANTHER" id="PTHR37307:SF1">
    <property type="entry name" value="CELL DIVISION PROTEIN WHIA-RELATED"/>
    <property type="match status" value="1"/>
</dbReference>
<dbReference type="Pfam" id="PF02650">
    <property type="entry name" value="HTH_WhiA"/>
    <property type="match status" value="1"/>
</dbReference>
<dbReference type="Pfam" id="PF14527">
    <property type="entry name" value="LAGLIDADG_WhiA"/>
    <property type="match status" value="1"/>
</dbReference>
<dbReference type="Pfam" id="PF10298">
    <property type="entry name" value="WhiA_N"/>
    <property type="match status" value="1"/>
</dbReference>
<dbReference type="SUPFAM" id="SSF55608">
    <property type="entry name" value="Homing endonucleases"/>
    <property type="match status" value="1"/>
</dbReference>
<dbReference type="PROSITE" id="PS50819">
    <property type="entry name" value="INTEIN_ENDONUCLEASE"/>
    <property type="match status" value="1"/>
</dbReference>
<name>WHIA_LEUCK</name>
<keyword id="KW-0131">Cell cycle</keyword>
<keyword id="KW-0132">Cell division</keyword>
<keyword id="KW-0238">DNA-binding</keyword>
<keyword id="KW-1185">Reference proteome</keyword>
<accession>B1MXG8</accession>
<evidence type="ECO:0000255" key="1">
    <source>
        <dbReference type="HAMAP-Rule" id="MF_01420"/>
    </source>
</evidence>